<sequence>MLPVRESLQKQVKILIGLGNLGFGGYRGLYTRFTNPNGFLEPASSDLLLINERRNLSVIGAVSRTFSVPSVSGPAFQVCGYHIDLLLSDPCKSMASLGSKSLFVDRHSASLVSKRFTGGMVSGDGPNRGRISMRLRGKDHNEKSTICAYFAYRGAKRWIYLNQQRRGMGFRGLHSSLSNRLSAGNAPDVSLDNSVTDEQVRDSSDSVAAKLCTKPLKLVSGSCYLPHPDKEATGGEDAHFICAEEQALGVADGVGGWAELGIDAGYYSRELMSNSVNAIQDEPKGSIDPARVLEKAHTCTKSQGSSTACIIALTNQGLHAINLGDSGFMVVREGHTVFRSPVQQHDFNFTYQLESGRNGDLPSSGQVFTVAVAPGDVIIAGTDGLFDNLYNNEITAIVVHAVRANIDPQVTAQKIAALARQRAQDKNRQTPFSTAAQDAGFRYYGGKLDDITVVVSYVAASKEEGKH</sequence>
<protein>
    <recommendedName>
        <fullName>Probable protein phosphatase 2C 55</fullName>
        <shortName>AtPP2C55</shortName>
        <ecNumber>3.1.3.16</ecNumber>
    </recommendedName>
</protein>
<organism>
    <name type="scientific">Arabidopsis thaliana</name>
    <name type="common">Mouse-ear cress</name>
    <dbReference type="NCBI Taxonomy" id="3702"/>
    <lineage>
        <taxon>Eukaryota</taxon>
        <taxon>Viridiplantae</taxon>
        <taxon>Streptophyta</taxon>
        <taxon>Embryophyta</taxon>
        <taxon>Tracheophyta</taxon>
        <taxon>Spermatophyta</taxon>
        <taxon>Magnoliopsida</taxon>
        <taxon>eudicotyledons</taxon>
        <taxon>Gunneridae</taxon>
        <taxon>Pentapetalae</taxon>
        <taxon>rosids</taxon>
        <taxon>malvids</taxon>
        <taxon>Brassicales</taxon>
        <taxon>Brassicaceae</taxon>
        <taxon>Camelineae</taxon>
        <taxon>Arabidopsis</taxon>
    </lineage>
</organism>
<evidence type="ECO:0000250" key="1"/>
<evidence type="ECO:0000255" key="2">
    <source>
        <dbReference type="PROSITE-ProRule" id="PRU01082"/>
    </source>
</evidence>
<evidence type="ECO:0000305" key="3"/>
<gene>
    <name type="ordered locus">At4g16580</name>
    <name type="ORF">dl4315c</name>
    <name type="ORF">FCAALL.400</name>
</gene>
<keyword id="KW-0378">Hydrolase</keyword>
<keyword id="KW-0460">Magnesium</keyword>
<keyword id="KW-0464">Manganese</keyword>
<keyword id="KW-0479">Metal-binding</keyword>
<keyword id="KW-0904">Protein phosphatase</keyword>
<keyword id="KW-1185">Reference proteome</keyword>
<proteinExistence type="evidence at transcript level"/>
<comment type="catalytic activity">
    <reaction>
        <text>O-phospho-L-seryl-[protein] + H2O = L-seryl-[protein] + phosphate</text>
        <dbReference type="Rhea" id="RHEA:20629"/>
        <dbReference type="Rhea" id="RHEA-COMP:9863"/>
        <dbReference type="Rhea" id="RHEA-COMP:11604"/>
        <dbReference type="ChEBI" id="CHEBI:15377"/>
        <dbReference type="ChEBI" id="CHEBI:29999"/>
        <dbReference type="ChEBI" id="CHEBI:43474"/>
        <dbReference type="ChEBI" id="CHEBI:83421"/>
        <dbReference type="EC" id="3.1.3.16"/>
    </reaction>
</comment>
<comment type="catalytic activity">
    <reaction>
        <text>O-phospho-L-threonyl-[protein] + H2O = L-threonyl-[protein] + phosphate</text>
        <dbReference type="Rhea" id="RHEA:47004"/>
        <dbReference type="Rhea" id="RHEA-COMP:11060"/>
        <dbReference type="Rhea" id="RHEA-COMP:11605"/>
        <dbReference type="ChEBI" id="CHEBI:15377"/>
        <dbReference type="ChEBI" id="CHEBI:30013"/>
        <dbReference type="ChEBI" id="CHEBI:43474"/>
        <dbReference type="ChEBI" id="CHEBI:61977"/>
        <dbReference type="EC" id="3.1.3.16"/>
    </reaction>
</comment>
<comment type="cofactor">
    <cofactor evidence="1">
        <name>Mg(2+)</name>
        <dbReference type="ChEBI" id="CHEBI:18420"/>
    </cofactor>
    <cofactor evidence="1">
        <name>Mn(2+)</name>
        <dbReference type="ChEBI" id="CHEBI:29035"/>
    </cofactor>
    <text evidence="1">Binds 2 magnesium or manganese ions per subunit.</text>
</comment>
<comment type="similarity">
    <text evidence="3">Belongs to the PP2C family.</text>
</comment>
<comment type="sequence caution" evidence="3">
    <conflict type="erroneous initiation">
        <sequence resource="EMBL-CDS" id="CAB46038"/>
    </conflict>
</comment>
<comment type="sequence caution" evidence="3">
    <conflict type="erroneous initiation">
        <sequence resource="EMBL-CDS" id="CAB78700"/>
    </conflict>
</comment>
<name>P2C55_ARATH</name>
<reference key="1">
    <citation type="journal article" date="1998" name="Nature">
        <title>Analysis of 1.9 Mb of contiguous sequence from chromosome 4 of Arabidopsis thaliana.</title>
        <authorList>
            <person name="Bevan M."/>
            <person name="Bancroft I."/>
            <person name="Bent E."/>
            <person name="Love K."/>
            <person name="Goodman H.M."/>
            <person name="Dean C."/>
            <person name="Bergkamp R."/>
            <person name="Dirkse W."/>
            <person name="van Staveren M."/>
            <person name="Stiekema W."/>
            <person name="Drost L."/>
            <person name="Ridley P."/>
            <person name="Hudson S.-A."/>
            <person name="Patel K."/>
            <person name="Murphy G."/>
            <person name="Piffanelli P."/>
            <person name="Wedler H."/>
            <person name="Wedler E."/>
            <person name="Wambutt R."/>
            <person name="Weitzenegger T."/>
            <person name="Pohl T."/>
            <person name="Terryn N."/>
            <person name="Gielen J."/>
            <person name="Villarroel R."/>
            <person name="De Clercq R."/>
            <person name="van Montagu M."/>
            <person name="Lecharny A."/>
            <person name="Aubourg S."/>
            <person name="Gy I."/>
            <person name="Kreis M."/>
            <person name="Lao N."/>
            <person name="Kavanagh T."/>
            <person name="Hempel S."/>
            <person name="Kotter P."/>
            <person name="Entian K.-D."/>
            <person name="Rieger M."/>
            <person name="Schaefer M."/>
            <person name="Funk B."/>
            <person name="Mueller-Auer S."/>
            <person name="Silvey M."/>
            <person name="James R."/>
            <person name="Monfort A."/>
            <person name="Pons A."/>
            <person name="Puigdomenech P."/>
            <person name="Douka A."/>
            <person name="Voukelatou E."/>
            <person name="Milioni D."/>
            <person name="Hatzopoulos P."/>
            <person name="Piravandi E."/>
            <person name="Obermaier B."/>
            <person name="Hilbert H."/>
            <person name="Duesterhoeft A."/>
            <person name="Moores T."/>
            <person name="Jones J.D.G."/>
            <person name="Eneva T."/>
            <person name="Palme K."/>
            <person name="Benes V."/>
            <person name="Rechmann S."/>
            <person name="Ansorge W."/>
            <person name="Cooke R."/>
            <person name="Berger C."/>
            <person name="Delseny M."/>
            <person name="Voet M."/>
            <person name="Volckaert G."/>
            <person name="Mewes H.-W."/>
            <person name="Klosterman S."/>
            <person name="Schueller C."/>
            <person name="Chalwatzis N."/>
        </authorList>
    </citation>
    <scope>NUCLEOTIDE SEQUENCE [LARGE SCALE GENOMIC DNA]</scope>
    <source>
        <strain>cv. Columbia</strain>
    </source>
</reference>
<reference key="2">
    <citation type="journal article" date="1999" name="Nature">
        <title>Sequence and analysis of chromosome 4 of the plant Arabidopsis thaliana.</title>
        <authorList>
            <person name="Mayer K.F.X."/>
            <person name="Schueller C."/>
            <person name="Wambutt R."/>
            <person name="Murphy G."/>
            <person name="Volckaert G."/>
            <person name="Pohl T."/>
            <person name="Duesterhoeft A."/>
            <person name="Stiekema W."/>
            <person name="Entian K.-D."/>
            <person name="Terryn N."/>
            <person name="Harris B."/>
            <person name="Ansorge W."/>
            <person name="Brandt P."/>
            <person name="Grivell L.A."/>
            <person name="Rieger M."/>
            <person name="Weichselgartner M."/>
            <person name="de Simone V."/>
            <person name="Obermaier B."/>
            <person name="Mache R."/>
            <person name="Mueller M."/>
            <person name="Kreis M."/>
            <person name="Delseny M."/>
            <person name="Puigdomenech P."/>
            <person name="Watson M."/>
            <person name="Schmidtheini T."/>
            <person name="Reichert B."/>
            <person name="Portetelle D."/>
            <person name="Perez-Alonso M."/>
            <person name="Boutry M."/>
            <person name="Bancroft I."/>
            <person name="Vos P."/>
            <person name="Hoheisel J."/>
            <person name="Zimmermann W."/>
            <person name="Wedler H."/>
            <person name="Ridley P."/>
            <person name="Langham S.-A."/>
            <person name="McCullagh B."/>
            <person name="Bilham L."/>
            <person name="Robben J."/>
            <person name="van der Schueren J."/>
            <person name="Grymonprez B."/>
            <person name="Chuang Y.-J."/>
            <person name="Vandenbussche F."/>
            <person name="Braeken M."/>
            <person name="Weltjens I."/>
            <person name="Voet M."/>
            <person name="Bastiaens I."/>
            <person name="Aert R."/>
            <person name="Defoor E."/>
            <person name="Weitzenegger T."/>
            <person name="Bothe G."/>
            <person name="Ramsperger U."/>
            <person name="Hilbert H."/>
            <person name="Braun M."/>
            <person name="Holzer E."/>
            <person name="Brandt A."/>
            <person name="Peters S."/>
            <person name="van Staveren M."/>
            <person name="Dirkse W."/>
            <person name="Mooijman P."/>
            <person name="Klein Lankhorst R."/>
            <person name="Rose M."/>
            <person name="Hauf J."/>
            <person name="Koetter P."/>
            <person name="Berneiser S."/>
            <person name="Hempel S."/>
            <person name="Feldpausch M."/>
            <person name="Lamberth S."/>
            <person name="Van den Daele H."/>
            <person name="De Keyser A."/>
            <person name="Buysshaert C."/>
            <person name="Gielen J."/>
            <person name="Villarroel R."/>
            <person name="De Clercq R."/>
            <person name="van Montagu M."/>
            <person name="Rogers J."/>
            <person name="Cronin A."/>
            <person name="Quail M.A."/>
            <person name="Bray-Allen S."/>
            <person name="Clark L."/>
            <person name="Doggett J."/>
            <person name="Hall S."/>
            <person name="Kay M."/>
            <person name="Lennard N."/>
            <person name="McLay K."/>
            <person name="Mayes R."/>
            <person name="Pettett A."/>
            <person name="Rajandream M.A."/>
            <person name="Lyne M."/>
            <person name="Benes V."/>
            <person name="Rechmann S."/>
            <person name="Borkova D."/>
            <person name="Bloecker H."/>
            <person name="Scharfe M."/>
            <person name="Grimm M."/>
            <person name="Loehnert T.-H."/>
            <person name="Dose S."/>
            <person name="de Haan M."/>
            <person name="Maarse A.C."/>
            <person name="Schaefer M."/>
            <person name="Mueller-Auer S."/>
            <person name="Gabel C."/>
            <person name="Fuchs M."/>
            <person name="Fartmann B."/>
            <person name="Granderath K."/>
            <person name="Dauner D."/>
            <person name="Herzl A."/>
            <person name="Neumann S."/>
            <person name="Argiriou A."/>
            <person name="Vitale D."/>
            <person name="Liguori R."/>
            <person name="Piravandi E."/>
            <person name="Massenet O."/>
            <person name="Quigley F."/>
            <person name="Clabauld G."/>
            <person name="Muendlein A."/>
            <person name="Felber R."/>
            <person name="Schnabl S."/>
            <person name="Hiller R."/>
            <person name="Schmidt W."/>
            <person name="Lecharny A."/>
            <person name="Aubourg S."/>
            <person name="Chefdor F."/>
            <person name="Cooke R."/>
            <person name="Berger C."/>
            <person name="Monfort A."/>
            <person name="Casacuberta E."/>
            <person name="Gibbons T."/>
            <person name="Weber N."/>
            <person name="Vandenbol M."/>
            <person name="Bargues M."/>
            <person name="Terol J."/>
            <person name="Torres A."/>
            <person name="Perez-Perez A."/>
            <person name="Purnelle B."/>
            <person name="Bent E."/>
            <person name="Johnson S."/>
            <person name="Tacon D."/>
            <person name="Jesse T."/>
            <person name="Heijnen L."/>
            <person name="Schwarz S."/>
            <person name="Scholler P."/>
            <person name="Heber S."/>
            <person name="Francs P."/>
            <person name="Bielke C."/>
            <person name="Frishman D."/>
            <person name="Haase D."/>
            <person name="Lemcke K."/>
            <person name="Mewes H.-W."/>
            <person name="Stocker S."/>
            <person name="Zaccaria P."/>
            <person name="Bevan M."/>
            <person name="Wilson R.K."/>
            <person name="de la Bastide M."/>
            <person name="Habermann K."/>
            <person name="Parnell L."/>
            <person name="Dedhia N."/>
            <person name="Gnoj L."/>
            <person name="Schutz K."/>
            <person name="Huang E."/>
            <person name="Spiegel L."/>
            <person name="Sekhon M."/>
            <person name="Murray J."/>
            <person name="Sheet P."/>
            <person name="Cordes M."/>
            <person name="Abu-Threideh J."/>
            <person name="Stoneking T."/>
            <person name="Kalicki J."/>
            <person name="Graves T."/>
            <person name="Harmon G."/>
            <person name="Edwards J."/>
            <person name="Latreille P."/>
            <person name="Courtney L."/>
            <person name="Cloud J."/>
            <person name="Abbott A."/>
            <person name="Scott K."/>
            <person name="Johnson D."/>
            <person name="Minx P."/>
            <person name="Bentley D."/>
            <person name="Fulton B."/>
            <person name="Miller N."/>
            <person name="Greco T."/>
            <person name="Kemp K."/>
            <person name="Kramer J."/>
            <person name="Fulton L."/>
            <person name="Mardis E."/>
            <person name="Dante M."/>
            <person name="Pepin K."/>
            <person name="Hillier L.W."/>
            <person name="Nelson J."/>
            <person name="Spieth J."/>
            <person name="Ryan E."/>
            <person name="Andrews S."/>
            <person name="Geisel C."/>
            <person name="Layman D."/>
            <person name="Du H."/>
            <person name="Ali J."/>
            <person name="Berghoff A."/>
            <person name="Jones K."/>
            <person name="Drone K."/>
            <person name="Cotton M."/>
            <person name="Joshu C."/>
            <person name="Antonoiu B."/>
            <person name="Zidanic M."/>
            <person name="Strong C."/>
            <person name="Sun H."/>
            <person name="Lamar B."/>
            <person name="Yordan C."/>
            <person name="Ma P."/>
            <person name="Zhong J."/>
            <person name="Preston R."/>
            <person name="Vil D."/>
            <person name="Shekher M."/>
            <person name="Matero A."/>
            <person name="Shah R."/>
            <person name="Swaby I.K."/>
            <person name="O'Shaughnessy A."/>
            <person name="Rodriguez M."/>
            <person name="Hoffman J."/>
            <person name="Till S."/>
            <person name="Granat S."/>
            <person name="Shohdy N."/>
            <person name="Hasegawa A."/>
            <person name="Hameed A."/>
            <person name="Lodhi M."/>
            <person name="Johnson A."/>
            <person name="Chen E."/>
            <person name="Marra M.A."/>
            <person name="Martienssen R."/>
            <person name="McCombie W.R."/>
        </authorList>
    </citation>
    <scope>NUCLEOTIDE SEQUENCE [LARGE SCALE GENOMIC DNA]</scope>
    <source>
        <strain>cv. Columbia</strain>
    </source>
</reference>
<reference key="3">
    <citation type="journal article" date="2017" name="Plant J.">
        <title>Araport11: a complete reannotation of the Arabidopsis thaliana reference genome.</title>
        <authorList>
            <person name="Cheng C.Y."/>
            <person name="Krishnakumar V."/>
            <person name="Chan A.P."/>
            <person name="Thibaud-Nissen F."/>
            <person name="Schobel S."/>
            <person name="Town C.D."/>
        </authorList>
    </citation>
    <scope>GENOME REANNOTATION</scope>
    <source>
        <strain>cv. Columbia</strain>
    </source>
</reference>
<reference key="4">
    <citation type="journal article" date="2002" name="Science">
        <title>Functional annotation of a full-length Arabidopsis cDNA collection.</title>
        <authorList>
            <person name="Seki M."/>
            <person name="Narusaka M."/>
            <person name="Kamiya A."/>
            <person name="Ishida J."/>
            <person name="Satou M."/>
            <person name="Sakurai T."/>
            <person name="Nakajima M."/>
            <person name="Enju A."/>
            <person name="Akiyama K."/>
            <person name="Oono Y."/>
            <person name="Muramatsu M."/>
            <person name="Hayashizaki Y."/>
            <person name="Kawai J."/>
            <person name="Carninci P."/>
            <person name="Itoh M."/>
            <person name="Ishii Y."/>
            <person name="Arakawa T."/>
            <person name="Shibata K."/>
            <person name="Shinagawa A."/>
            <person name="Shinozaki K."/>
        </authorList>
    </citation>
    <scope>NUCLEOTIDE SEQUENCE [LARGE SCALE MRNA] OF 138-467</scope>
    <source>
        <strain>cv. Columbia</strain>
    </source>
</reference>
<reference key="5">
    <citation type="journal article" date="2003" name="Science">
        <title>Empirical analysis of transcriptional activity in the Arabidopsis genome.</title>
        <authorList>
            <person name="Yamada K."/>
            <person name="Lim J."/>
            <person name="Dale J.M."/>
            <person name="Chen H."/>
            <person name="Shinn P."/>
            <person name="Palm C.J."/>
            <person name="Southwick A.M."/>
            <person name="Wu H.C."/>
            <person name="Kim C.J."/>
            <person name="Nguyen M."/>
            <person name="Pham P.K."/>
            <person name="Cheuk R.F."/>
            <person name="Karlin-Newmann G."/>
            <person name="Liu S.X."/>
            <person name="Lam B."/>
            <person name="Sakano H."/>
            <person name="Wu T."/>
            <person name="Yu G."/>
            <person name="Miranda M."/>
            <person name="Quach H.L."/>
            <person name="Tripp M."/>
            <person name="Chang C.H."/>
            <person name="Lee J.M."/>
            <person name="Toriumi M.J."/>
            <person name="Chan M.M."/>
            <person name="Tang C.C."/>
            <person name="Onodera C.S."/>
            <person name="Deng J.M."/>
            <person name="Akiyama K."/>
            <person name="Ansari Y."/>
            <person name="Arakawa T."/>
            <person name="Banh J."/>
            <person name="Banno F."/>
            <person name="Bowser L."/>
            <person name="Brooks S.Y."/>
            <person name="Carninci P."/>
            <person name="Chao Q."/>
            <person name="Choy N."/>
            <person name="Enju A."/>
            <person name="Goldsmith A.D."/>
            <person name="Gurjal M."/>
            <person name="Hansen N.F."/>
            <person name="Hayashizaki Y."/>
            <person name="Johnson-Hopson C."/>
            <person name="Hsuan V.W."/>
            <person name="Iida K."/>
            <person name="Karnes M."/>
            <person name="Khan S."/>
            <person name="Koesema E."/>
            <person name="Ishida J."/>
            <person name="Jiang P.X."/>
            <person name="Jones T."/>
            <person name="Kawai J."/>
            <person name="Kamiya A."/>
            <person name="Meyers C."/>
            <person name="Nakajima M."/>
            <person name="Narusaka M."/>
            <person name="Seki M."/>
            <person name="Sakurai T."/>
            <person name="Satou M."/>
            <person name="Tamse R."/>
            <person name="Vaysberg M."/>
            <person name="Wallender E.K."/>
            <person name="Wong C."/>
            <person name="Yamamura Y."/>
            <person name="Yuan S."/>
            <person name="Shinozaki K."/>
            <person name="Davis R.W."/>
            <person name="Theologis A."/>
            <person name="Ecker J.R."/>
        </authorList>
    </citation>
    <scope>NUCLEOTIDE SEQUENCE [LARGE SCALE MRNA] OF 168-467</scope>
    <source>
        <strain>cv. Columbia</strain>
    </source>
</reference>
<reference key="6">
    <citation type="journal article" date="2008" name="BMC Genomics">
        <title>Genome-wide and expression analysis of protein phosphatase 2C in rice and Arabidopsis.</title>
        <authorList>
            <person name="Xue T."/>
            <person name="Wang D."/>
            <person name="Zhang S."/>
            <person name="Ehlting J."/>
            <person name="Ni F."/>
            <person name="Jacab S."/>
            <person name="Zheng C."/>
            <person name="Zhong Y."/>
        </authorList>
    </citation>
    <scope>GENE FAMILY</scope>
    <scope>NOMENCLATURE</scope>
</reference>
<feature type="chain" id="PRO_0000367979" description="Probable protein phosphatase 2C 55">
    <location>
        <begin position="1"/>
        <end position="467"/>
    </location>
</feature>
<feature type="domain" description="PPM-type phosphatase" evidence="2">
    <location>
        <begin position="222"/>
        <end position="458"/>
    </location>
</feature>
<feature type="binding site" evidence="1">
    <location>
        <position position="252"/>
    </location>
    <ligand>
        <name>Mn(2+)</name>
        <dbReference type="ChEBI" id="CHEBI:29035"/>
        <label>1</label>
    </ligand>
</feature>
<feature type="binding site" evidence="1">
    <location>
        <position position="252"/>
    </location>
    <ligand>
        <name>Mn(2+)</name>
        <dbReference type="ChEBI" id="CHEBI:29035"/>
        <label>2</label>
    </ligand>
</feature>
<feature type="binding site" evidence="1">
    <location>
        <position position="253"/>
    </location>
    <ligand>
        <name>Mn(2+)</name>
        <dbReference type="ChEBI" id="CHEBI:29035"/>
        <label>1</label>
    </ligand>
</feature>
<feature type="binding site" evidence="1">
    <location>
        <position position="383"/>
    </location>
    <ligand>
        <name>Mn(2+)</name>
        <dbReference type="ChEBI" id="CHEBI:29035"/>
        <label>2</label>
    </ligand>
</feature>
<feature type="binding site" evidence="1">
    <location>
        <position position="449"/>
    </location>
    <ligand>
        <name>Mn(2+)</name>
        <dbReference type="ChEBI" id="CHEBI:29035"/>
        <label>2</label>
    </ligand>
</feature>
<dbReference type="EC" id="3.1.3.16"/>
<dbReference type="EMBL" id="Z97341">
    <property type="protein sequence ID" value="CAB46038.1"/>
    <property type="status" value="ALT_INIT"/>
    <property type="molecule type" value="Genomic_DNA"/>
</dbReference>
<dbReference type="EMBL" id="AL161544">
    <property type="protein sequence ID" value="CAB78700.1"/>
    <property type="status" value="ALT_INIT"/>
    <property type="molecule type" value="Genomic_DNA"/>
</dbReference>
<dbReference type="EMBL" id="CP002687">
    <property type="protein sequence ID" value="AEE83773.1"/>
    <property type="molecule type" value="Genomic_DNA"/>
</dbReference>
<dbReference type="EMBL" id="AK117940">
    <property type="protein sequence ID" value="BAC42578.1"/>
    <property type="molecule type" value="mRNA"/>
</dbReference>
<dbReference type="EMBL" id="BT005292">
    <property type="protein sequence ID" value="AAO63356.1"/>
    <property type="molecule type" value="mRNA"/>
</dbReference>
<dbReference type="PIR" id="E85184">
    <property type="entry name" value="E85184"/>
</dbReference>
<dbReference type="RefSeq" id="NP_193391.3">
    <property type="nucleotide sequence ID" value="NM_117759.4"/>
</dbReference>
<dbReference type="SMR" id="Q9SUK9"/>
<dbReference type="FunCoup" id="Q9SUK9">
    <property type="interactions" value="1891"/>
</dbReference>
<dbReference type="STRING" id="3702.Q9SUK9"/>
<dbReference type="iPTMnet" id="Q9SUK9"/>
<dbReference type="PaxDb" id="3702-AT4G16580.1"/>
<dbReference type="ProteomicsDB" id="248722"/>
<dbReference type="DNASU" id="827359"/>
<dbReference type="EnsemblPlants" id="AT4G16580.1">
    <property type="protein sequence ID" value="AT4G16580.1"/>
    <property type="gene ID" value="AT4G16580"/>
</dbReference>
<dbReference type="GeneID" id="827359"/>
<dbReference type="Gramene" id="AT4G16580.1">
    <property type="protein sequence ID" value="AT4G16580.1"/>
    <property type="gene ID" value="AT4G16580"/>
</dbReference>
<dbReference type="KEGG" id="ath:AT4G16580"/>
<dbReference type="Araport" id="AT4G16580"/>
<dbReference type="TAIR" id="AT4G16580"/>
<dbReference type="eggNOG" id="KOG1379">
    <property type="taxonomic scope" value="Eukaryota"/>
</dbReference>
<dbReference type="HOGENOM" id="CLU_029404_6_0_1"/>
<dbReference type="InParanoid" id="Q9SUK9"/>
<dbReference type="OMA" id="KPMAACG"/>
<dbReference type="OrthoDB" id="60843at2759"/>
<dbReference type="PhylomeDB" id="Q9SUK9"/>
<dbReference type="PRO" id="PR:Q9SUK9"/>
<dbReference type="Proteomes" id="UP000006548">
    <property type="component" value="Chromosome 4"/>
</dbReference>
<dbReference type="ExpressionAtlas" id="Q9SUK9">
    <property type="expression patterns" value="baseline and differential"/>
</dbReference>
<dbReference type="GO" id="GO:0046872">
    <property type="term" value="F:metal ion binding"/>
    <property type="evidence" value="ECO:0007669"/>
    <property type="project" value="UniProtKB-KW"/>
</dbReference>
<dbReference type="GO" id="GO:0004722">
    <property type="term" value="F:protein serine/threonine phosphatase activity"/>
    <property type="evidence" value="ECO:0007669"/>
    <property type="project" value="UniProtKB-EC"/>
</dbReference>
<dbReference type="FunFam" id="3.60.40.10:FF:000138">
    <property type="entry name" value="5-azacytidine resistance protein azr1"/>
    <property type="match status" value="1"/>
</dbReference>
<dbReference type="Gene3D" id="3.60.40.10">
    <property type="entry name" value="PPM-type phosphatase domain"/>
    <property type="match status" value="2"/>
</dbReference>
<dbReference type="InterPro" id="IPR036457">
    <property type="entry name" value="PPM-type-like_dom_sf"/>
</dbReference>
<dbReference type="InterPro" id="IPR001932">
    <property type="entry name" value="PPM-type_phosphatase-like_dom"/>
</dbReference>
<dbReference type="InterPro" id="IPR039123">
    <property type="entry name" value="PPTC7"/>
</dbReference>
<dbReference type="PANTHER" id="PTHR12320">
    <property type="entry name" value="PROTEIN PHOSPHATASE 2C"/>
    <property type="match status" value="1"/>
</dbReference>
<dbReference type="PANTHER" id="PTHR12320:SF83">
    <property type="entry name" value="PROTEIN PHOSPHATASE 2C 55-RELATED"/>
    <property type="match status" value="1"/>
</dbReference>
<dbReference type="Pfam" id="PF13672">
    <property type="entry name" value="PP2C_2"/>
    <property type="match status" value="1"/>
</dbReference>
<dbReference type="SMART" id="SM00331">
    <property type="entry name" value="PP2C_SIG"/>
    <property type="match status" value="1"/>
</dbReference>
<dbReference type="SMART" id="SM00332">
    <property type="entry name" value="PP2Cc"/>
    <property type="match status" value="1"/>
</dbReference>
<dbReference type="SUPFAM" id="SSF81606">
    <property type="entry name" value="PP2C-like"/>
    <property type="match status" value="1"/>
</dbReference>
<dbReference type="PROSITE" id="PS51746">
    <property type="entry name" value="PPM_2"/>
    <property type="match status" value="1"/>
</dbReference>
<accession>Q9SUK9</accession>
<accession>Q8GY02</accession>